<feature type="peptide" id="PRO_0000394761" description="2.4 kDa venom peptide">
    <location>
        <begin position="1"/>
        <end position="22"/>
    </location>
</feature>
<comment type="function">
    <text evidence="2">Not lethal to mice by intraperitoneal or intracerebroventricular injections in doses up to 150 micrograms.</text>
</comment>
<comment type="subcellular location">
    <subcellularLocation>
        <location evidence="2">Secreted</location>
    </subcellularLocation>
</comment>
<comment type="tissue specificity">
    <text evidence="2">Expressed by the venom gland.</text>
</comment>
<comment type="PTM">
    <text evidence="1">Contains 2 disulfide bonds.</text>
</comment>
<comment type="mass spectrometry"/>
<name>VP24_HETSP</name>
<protein>
    <recommendedName>
        <fullName>2.4 kDa venom peptide</fullName>
    </recommendedName>
</protein>
<sequence>SNVCFNACMKISSSQKTCQILC</sequence>
<accession>P83718</accession>
<keyword id="KW-0903">Direct protein sequencing</keyword>
<keyword id="KW-1015">Disulfide bond</keyword>
<keyword id="KW-0964">Secreted</keyword>
<evidence type="ECO:0000250" key="1"/>
<evidence type="ECO:0000269" key="2">
    <source ref="1"/>
</evidence>
<proteinExistence type="evidence at protein level"/>
<organism>
    <name type="scientific">Heterometrus spinifer</name>
    <name type="common">Asia giant forest scorpion</name>
    <name type="synonym">Malaysian black scorpion</name>
    <dbReference type="NCBI Taxonomy" id="118530"/>
    <lineage>
        <taxon>Eukaryota</taxon>
        <taxon>Metazoa</taxon>
        <taxon>Ecdysozoa</taxon>
        <taxon>Arthropoda</taxon>
        <taxon>Chelicerata</taxon>
        <taxon>Arachnida</taxon>
        <taxon>Scorpiones</taxon>
        <taxon>Iurida</taxon>
        <taxon>Scorpionoidea</taxon>
        <taxon>Scorpionidae</taxon>
        <taxon>Heterometrinae</taxon>
        <taxon>Heterometrus</taxon>
    </lineage>
</organism>
<dbReference type="GO" id="GO:0005576">
    <property type="term" value="C:extracellular region"/>
    <property type="evidence" value="ECO:0007669"/>
    <property type="project" value="UniProtKB-SubCell"/>
</dbReference>
<reference key="1">
    <citation type="submission" date="2003-11" db="UniProtKB">
        <authorList>
            <person name="Nirthanan S."/>
            <person name="Sato K."/>
            <person name="Gopalakrishnakone P."/>
        </authorList>
    </citation>
    <scope>PROTEIN SEQUENCE</scope>
    <scope>FUNCTION</scope>
    <scope>SUBCELLULAR LOCATION</scope>
    <scope>TISSUE SPECIFICITY</scope>
    <scope>MASS SPECTROMETRY</scope>
    <source>
        <tissue>Venom</tissue>
    </source>
</reference>